<comment type="function">
    <text evidence="1">Releases the supercoiling and torsional tension of DNA introduced during the DNA replication and transcription by transiently cleaving and rejoining one strand of the DNA duplex. Introduces a single-strand break via transesterification at a target site in duplex DNA. The scissile phosphodiester is attacked by the catalytic tyrosine of the enzyme, resulting in the formation of a DNA-(5'-phosphotyrosyl)-enzyme intermediate and the expulsion of a 3'-OH DNA strand. The free DNA strand than undergoes passage around the unbroken strand thus removing DNA supercoils. Finally, in the religation step, the DNA 3'-OH attacks the covalent intermediate to expel the active-site tyrosine and restore the DNA phosphodiester backbone (By similarity).</text>
</comment>
<comment type="catalytic activity">
    <reaction evidence="4">
        <text>ATP-independent breakage of single-stranded DNA, followed by passage and rejoining.</text>
        <dbReference type="EC" id="5.6.2.1"/>
    </reaction>
</comment>
<comment type="subunit">
    <text evidence="5">Interacts with hus2.</text>
</comment>
<comment type="similarity">
    <text evidence="3 6">Belongs to the type IA topoisomerase family.</text>
</comment>
<organism>
    <name type="scientific">Schizosaccharomyces pombe (strain 972 / ATCC 24843)</name>
    <name type="common">Fission yeast</name>
    <dbReference type="NCBI Taxonomy" id="284812"/>
    <lineage>
        <taxon>Eukaryota</taxon>
        <taxon>Fungi</taxon>
        <taxon>Dikarya</taxon>
        <taxon>Ascomycota</taxon>
        <taxon>Taphrinomycotina</taxon>
        <taxon>Schizosaccharomycetes</taxon>
        <taxon>Schizosaccharomycetales</taxon>
        <taxon>Schizosaccharomycetaceae</taxon>
        <taxon>Schizosaccharomyces</taxon>
    </lineage>
</organism>
<keyword id="KW-0238">DNA-binding</keyword>
<keyword id="KW-0413">Isomerase</keyword>
<keyword id="KW-1185">Reference proteome</keyword>
<keyword id="KW-0799">Topoisomerase</keyword>
<evidence type="ECO:0000250" key="1"/>
<evidence type="ECO:0000255" key="2">
    <source>
        <dbReference type="PROSITE-ProRule" id="PRU00995"/>
    </source>
</evidence>
<evidence type="ECO:0000255" key="3">
    <source>
        <dbReference type="PROSITE-ProRule" id="PRU01383"/>
    </source>
</evidence>
<evidence type="ECO:0000255" key="4">
    <source>
        <dbReference type="PROSITE-ProRule" id="PRU10131"/>
    </source>
</evidence>
<evidence type="ECO:0000269" key="5">
    <source>
    </source>
</evidence>
<evidence type="ECO:0000305" key="6"/>
<reference key="1">
    <citation type="journal article" date="1999" name="Nucleic Acids Res.">
        <title>The top3+ gene is essential in Schizosaccharomyces pombe and the lethality associated with its loss is caused by Rad12 helicase activity.</title>
        <authorList>
            <person name="Maftahi M."/>
            <person name="Han C.S."/>
            <person name="Langston L.D."/>
            <person name="Hope J.C."/>
            <person name="Zigouras N."/>
            <person name="Freyer G.A."/>
        </authorList>
    </citation>
    <scope>NUCLEOTIDE SEQUENCE [MRNA]</scope>
    <source>
        <strain>972 / ATCC 24843</strain>
    </source>
</reference>
<reference key="2">
    <citation type="journal article" date="2002" name="Nature">
        <title>The genome sequence of Schizosaccharomyces pombe.</title>
        <authorList>
            <person name="Wood V."/>
            <person name="Gwilliam R."/>
            <person name="Rajandream M.A."/>
            <person name="Lyne M.H."/>
            <person name="Lyne R."/>
            <person name="Stewart A."/>
            <person name="Sgouros J.G."/>
            <person name="Peat N."/>
            <person name="Hayles J."/>
            <person name="Baker S.G."/>
            <person name="Basham D."/>
            <person name="Bowman S."/>
            <person name="Brooks K."/>
            <person name="Brown D."/>
            <person name="Brown S."/>
            <person name="Chillingworth T."/>
            <person name="Churcher C.M."/>
            <person name="Collins M."/>
            <person name="Connor R."/>
            <person name="Cronin A."/>
            <person name="Davis P."/>
            <person name="Feltwell T."/>
            <person name="Fraser A."/>
            <person name="Gentles S."/>
            <person name="Goble A."/>
            <person name="Hamlin N."/>
            <person name="Harris D.E."/>
            <person name="Hidalgo J."/>
            <person name="Hodgson G."/>
            <person name="Holroyd S."/>
            <person name="Hornsby T."/>
            <person name="Howarth S."/>
            <person name="Huckle E.J."/>
            <person name="Hunt S."/>
            <person name="Jagels K."/>
            <person name="James K.D."/>
            <person name="Jones L."/>
            <person name="Jones M."/>
            <person name="Leather S."/>
            <person name="McDonald S."/>
            <person name="McLean J."/>
            <person name="Mooney P."/>
            <person name="Moule S."/>
            <person name="Mungall K.L."/>
            <person name="Murphy L.D."/>
            <person name="Niblett D."/>
            <person name="Odell C."/>
            <person name="Oliver K."/>
            <person name="O'Neil S."/>
            <person name="Pearson D."/>
            <person name="Quail M.A."/>
            <person name="Rabbinowitsch E."/>
            <person name="Rutherford K.M."/>
            <person name="Rutter S."/>
            <person name="Saunders D."/>
            <person name="Seeger K."/>
            <person name="Sharp S."/>
            <person name="Skelton J."/>
            <person name="Simmonds M.N."/>
            <person name="Squares R."/>
            <person name="Squares S."/>
            <person name="Stevens K."/>
            <person name="Taylor K."/>
            <person name="Taylor R.G."/>
            <person name="Tivey A."/>
            <person name="Walsh S.V."/>
            <person name="Warren T."/>
            <person name="Whitehead S."/>
            <person name="Woodward J.R."/>
            <person name="Volckaert G."/>
            <person name="Aert R."/>
            <person name="Robben J."/>
            <person name="Grymonprez B."/>
            <person name="Weltjens I."/>
            <person name="Vanstreels E."/>
            <person name="Rieger M."/>
            <person name="Schaefer M."/>
            <person name="Mueller-Auer S."/>
            <person name="Gabel C."/>
            <person name="Fuchs M."/>
            <person name="Duesterhoeft A."/>
            <person name="Fritzc C."/>
            <person name="Holzer E."/>
            <person name="Moestl D."/>
            <person name="Hilbert H."/>
            <person name="Borzym K."/>
            <person name="Langer I."/>
            <person name="Beck A."/>
            <person name="Lehrach H."/>
            <person name="Reinhardt R."/>
            <person name="Pohl T.M."/>
            <person name="Eger P."/>
            <person name="Zimmermann W."/>
            <person name="Wedler H."/>
            <person name="Wambutt R."/>
            <person name="Purnelle B."/>
            <person name="Goffeau A."/>
            <person name="Cadieu E."/>
            <person name="Dreano S."/>
            <person name="Gloux S."/>
            <person name="Lelaure V."/>
            <person name="Mottier S."/>
            <person name="Galibert F."/>
            <person name="Aves S.J."/>
            <person name="Xiang Z."/>
            <person name="Hunt C."/>
            <person name="Moore K."/>
            <person name="Hurst S.M."/>
            <person name="Lucas M."/>
            <person name="Rochet M."/>
            <person name="Gaillardin C."/>
            <person name="Tallada V.A."/>
            <person name="Garzon A."/>
            <person name="Thode G."/>
            <person name="Daga R.R."/>
            <person name="Cruzado L."/>
            <person name="Jimenez J."/>
            <person name="Sanchez M."/>
            <person name="del Rey F."/>
            <person name="Benito J."/>
            <person name="Dominguez A."/>
            <person name="Revuelta J.L."/>
            <person name="Moreno S."/>
            <person name="Armstrong J."/>
            <person name="Forsburg S.L."/>
            <person name="Cerutti L."/>
            <person name="Lowe T."/>
            <person name="McCombie W.R."/>
            <person name="Paulsen I."/>
            <person name="Potashkin J."/>
            <person name="Shpakovski G.V."/>
            <person name="Ussery D."/>
            <person name="Barrell B.G."/>
            <person name="Nurse P."/>
        </authorList>
    </citation>
    <scope>NUCLEOTIDE SEQUENCE [LARGE SCALE GENOMIC DNA]</scope>
    <source>
        <strain>972 / ATCC 24843</strain>
    </source>
</reference>
<reference key="3">
    <citation type="journal article" date="2003" name="Mol. Cell. Biol.">
        <title>Role for the fission yeast RecQ helicase in DNA repair in G2.</title>
        <authorList>
            <person name="Laursen L.V."/>
            <person name="Ampatzidou E."/>
            <person name="Andersen A.H."/>
            <person name="Murray J.M."/>
        </authorList>
    </citation>
    <scope>INTERACTION WITH HUS2</scope>
</reference>
<accession>O60126</accession>
<gene>
    <name type="primary">top3</name>
    <name type="ORF">SPBC16G5.12c</name>
</gene>
<proteinExistence type="evidence at protein level"/>
<sequence>MRVLCVAEKNSIAKSVASILGGGHVRRRDTRSKYVKNYDFSFNFGGNVGSSDVTMTSVSGHLTEASFPSEYSSWSSVPQDVLFDAQIITSVSKNAEVLADNIKKEARNAQYLYIWTDCDREGEHIGVEISNVARASNPSIQVIRADFNNLERSHIISAAKRPRDVSKNAADAVDARIELDFRLGAIFTRLQTIQLQKSFDILQNKIISYGPCQFPTLGFVVDRWQRVEDFVPETYWHLRFVDKRQGKTIQFNWERAKVFDRLTTMIILENCLECKTAKVVNITQKPKTKYKPLPLSTVELTKLGPKHLRISAKKTLELAENLYTNGFVSYPRTETDQFDSSMNLHAIIQKLTGAQEWDSYAEGLLAGDYRPPRKGKHNDRAHPPIHPVQMVHRSALPSQDHWKVYELITRRFLACCSDNAKGAETLVQVKMEEELFSKKGLLVTEKNYLEVYPYEKWESSDQLPEYRLHEEFQPHILDMMDSSTSSPSYITEPELIALMDANGIGTDATMAEHIEKVQEREYVIKRKKRGQGVTEFVPSSLGVALAKGYDEIGLEWSLTKPFLRKEMEVQLKNIENGQLNRNVLVHMILTQFRDVFHLTKQRFDCLKNSCRVYLMSHNEPQT</sequence>
<feature type="chain" id="PRO_0000145197" description="DNA topoisomerase 3">
    <location>
        <begin position="1"/>
        <end position="622"/>
    </location>
</feature>
<feature type="domain" description="Toprim" evidence="2">
    <location>
        <begin position="2"/>
        <end position="148"/>
    </location>
</feature>
<feature type="domain" description="Topo IA-type catalytic" evidence="3">
    <location>
        <begin position="166"/>
        <end position="596"/>
    </location>
</feature>
<feature type="active site" description="O-(5'-phospho-DNA)-tyrosine intermediate" evidence="3">
    <location>
        <position position="330"/>
    </location>
</feature>
<dbReference type="EC" id="5.6.2.1" evidence="4"/>
<dbReference type="EMBL" id="AF126287">
    <property type="protein sequence ID" value="AAD22485.2"/>
    <property type="molecule type" value="mRNA"/>
</dbReference>
<dbReference type="EMBL" id="CU329671">
    <property type="protein sequence ID" value="CAA19038.1"/>
    <property type="molecule type" value="Genomic_DNA"/>
</dbReference>
<dbReference type="PIR" id="T39604">
    <property type="entry name" value="T39604"/>
</dbReference>
<dbReference type="RefSeq" id="NP_596761.1">
    <property type="nucleotide sequence ID" value="NM_001023781.2"/>
</dbReference>
<dbReference type="SMR" id="O60126"/>
<dbReference type="BioGRID" id="276427">
    <property type="interactions" value="13"/>
</dbReference>
<dbReference type="FunCoup" id="O60126">
    <property type="interactions" value="974"/>
</dbReference>
<dbReference type="STRING" id="284812.O60126"/>
<dbReference type="PaxDb" id="4896-SPBC16G5.12c.1"/>
<dbReference type="EnsemblFungi" id="SPBC16G5.12c.1">
    <property type="protein sequence ID" value="SPBC16G5.12c.1:pep"/>
    <property type="gene ID" value="SPBC16G5.12c"/>
</dbReference>
<dbReference type="GeneID" id="2539881"/>
<dbReference type="KEGG" id="spo:2539881"/>
<dbReference type="PomBase" id="SPBC16G5.12c">
    <property type="gene designation" value="top3"/>
</dbReference>
<dbReference type="VEuPathDB" id="FungiDB:SPBC16G5.12c"/>
<dbReference type="eggNOG" id="KOG1956">
    <property type="taxonomic scope" value="Eukaryota"/>
</dbReference>
<dbReference type="HOGENOM" id="CLU_002929_1_1_1"/>
<dbReference type="InParanoid" id="O60126"/>
<dbReference type="OMA" id="VIHNVYS"/>
<dbReference type="PhylomeDB" id="O60126"/>
<dbReference type="PRO" id="PR:O60126"/>
<dbReference type="Proteomes" id="UP000002485">
    <property type="component" value="Chromosome II"/>
</dbReference>
<dbReference type="GO" id="GO:0005634">
    <property type="term" value="C:nucleus"/>
    <property type="evidence" value="ECO:0000314"/>
    <property type="project" value="PomBase"/>
</dbReference>
<dbReference type="GO" id="GO:0031422">
    <property type="term" value="C:RecQ family helicase-topoisomerase III complex"/>
    <property type="evidence" value="ECO:0000314"/>
    <property type="project" value="PomBase"/>
</dbReference>
<dbReference type="GO" id="GO:0035861">
    <property type="term" value="C:site of double-strand break"/>
    <property type="evidence" value="ECO:0000314"/>
    <property type="project" value="PomBase"/>
</dbReference>
<dbReference type="GO" id="GO:0003677">
    <property type="term" value="F:DNA binding"/>
    <property type="evidence" value="ECO:0000255"/>
    <property type="project" value="PomBase"/>
</dbReference>
<dbReference type="GO" id="GO:0003917">
    <property type="term" value="F:DNA topoisomerase type I (single strand cut, ATP-independent) activity"/>
    <property type="evidence" value="ECO:0000318"/>
    <property type="project" value="GO_Central"/>
</dbReference>
<dbReference type="GO" id="GO:0006310">
    <property type="term" value="P:DNA recombination"/>
    <property type="evidence" value="ECO:0000318"/>
    <property type="project" value="GO_Central"/>
</dbReference>
<dbReference type="GO" id="GO:0006281">
    <property type="term" value="P:DNA repair"/>
    <property type="evidence" value="ECO:0000318"/>
    <property type="project" value="GO_Central"/>
</dbReference>
<dbReference type="GO" id="GO:0006265">
    <property type="term" value="P:DNA topological change"/>
    <property type="evidence" value="ECO:0000318"/>
    <property type="project" value="GO_Central"/>
</dbReference>
<dbReference type="GO" id="GO:0035825">
    <property type="term" value="P:homologous recombination"/>
    <property type="evidence" value="ECO:0000269"/>
    <property type="project" value="PomBase"/>
</dbReference>
<dbReference type="GO" id="GO:0033260">
    <property type="term" value="P:nuclear DNA replication"/>
    <property type="evidence" value="ECO:0000315"/>
    <property type="project" value="PomBase"/>
</dbReference>
<dbReference type="GO" id="GO:0006301">
    <property type="term" value="P:postreplication repair"/>
    <property type="evidence" value="ECO:0000316"/>
    <property type="project" value="PomBase"/>
</dbReference>
<dbReference type="GO" id="GO:0045458">
    <property type="term" value="P:recombination within rDNA repeats"/>
    <property type="evidence" value="ECO:0000269"/>
    <property type="project" value="PomBase"/>
</dbReference>
<dbReference type="CDD" id="cd00186">
    <property type="entry name" value="TOP1Ac"/>
    <property type="match status" value="1"/>
</dbReference>
<dbReference type="CDD" id="cd03362">
    <property type="entry name" value="TOPRIM_TopoIA_TopoIII"/>
    <property type="match status" value="1"/>
</dbReference>
<dbReference type="FunFam" id="1.10.290.10:FF:000001">
    <property type="entry name" value="DNA topoisomerase"/>
    <property type="match status" value="1"/>
</dbReference>
<dbReference type="FunFam" id="3.40.50.140:FF:000003">
    <property type="entry name" value="DNA topoisomerase"/>
    <property type="match status" value="1"/>
</dbReference>
<dbReference type="Gene3D" id="3.40.50.140">
    <property type="match status" value="1"/>
</dbReference>
<dbReference type="Gene3D" id="1.10.460.10">
    <property type="entry name" value="Topoisomerase I, domain 2"/>
    <property type="match status" value="1"/>
</dbReference>
<dbReference type="Gene3D" id="2.70.20.10">
    <property type="entry name" value="Topoisomerase I, domain 3"/>
    <property type="match status" value="1"/>
</dbReference>
<dbReference type="Gene3D" id="1.10.290.10">
    <property type="entry name" value="Topoisomerase I, domain 4"/>
    <property type="match status" value="1"/>
</dbReference>
<dbReference type="InterPro" id="IPR000380">
    <property type="entry name" value="Topo_IA"/>
</dbReference>
<dbReference type="InterPro" id="IPR003601">
    <property type="entry name" value="Topo_IA_2"/>
</dbReference>
<dbReference type="InterPro" id="IPR023406">
    <property type="entry name" value="Topo_IA_AS"/>
</dbReference>
<dbReference type="InterPro" id="IPR013497">
    <property type="entry name" value="Topo_IA_cen"/>
</dbReference>
<dbReference type="InterPro" id="IPR013824">
    <property type="entry name" value="Topo_IA_cen_sub1"/>
</dbReference>
<dbReference type="InterPro" id="IPR013825">
    <property type="entry name" value="Topo_IA_cen_sub2"/>
</dbReference>
<dbReference type="InterPro" id="IPR013826">
    <property type="entry name" value="Topo_IA_cen_sub3"/>
</dbReference>
<dbReference type="InterPro" id="IPR023405">
    <property type="entry name" value="Topo_IA_core_domain"/>
</dbReference>
<dbReference type="InterPro" id="IPR003602">
    <property type="entry name" value="Topo_IA_DNA-bd_dom"/>
</dbReference>
<dbReference type="InterPro" id="IPR006171">
    <property type="entry name" value="TOPRIM_dom"/>
</dbReference>
<dbReference type="InterPro" id="IPR034144">
    <property type="entry name" value="TOPRIM_TopoIII"/>
</dbReference>
<dbReference type="PANTHER" id="PTHR11390:SF21">
    <property type="entry name" value="DNA TOPOISOMERASE 3-ALPHA"/>
    <property type="match status" value="1"/>
</dbReference>
<dbReference type="PANTHER" id="PTHR11390">
    <property type="entry name" value="PROKARYOTIC DNA TOPOISOMERASE"/>
    <property type="match status" value="1"/>
</dbReference>
<dbReference type="Pfam" id="PF01131">
    <property type="entry name" value="Topoisom_bac"/>
    <property type="match status" value="1"/>
</dbReference>
<dbReference type="Pfam" id="PF01751">
    <property type="entry name" value="Toprim"/>
    <property type="match status" value="1"/>
</dbReference>
<dbReference type="PRINTS" id="PR00417">
    <property type="entry name" value="PRTPISMRASEI"/>
</dbReference>
<dbReference type="SMART" id="SM00437">
    <property type="entry name" value="TOP1Ac"/>
    <property type="match status" value="1"/>
</dbReference>
<dbReference type="SMART" id="SM00436">
    <property type="entry name" value="TOP1Bc"/>
    <property type="match status" value="1"/>
</dbReference>
<dbReference type="SMART" id="SM00493">
    <property type="entry name" value="TOPRIM"/>
    <property type="match status" value="1"/>
</dbReference>
<dbReference type="SUPFAM" id="SSF56712">
    <property type="entry name" value="Prokaryotic type I DNA topoisomerase"/>
    <property type="match status" value="1"/>
</dbReference>
<dbReference type="PROSITE" id="PS00396">
    <property type="entry name" value="TOPO_IA_1"/>
    <property type="match status" value="1"/>
</dbReference>
<dbReference type="PROSITE" id="PS52039">
    <property type="entry name" value="TOPO_IA_2"/>
    <property type="match status" value="1"/>
</dbReference>
<dbReference type="PROSITE" id="PS50880">
    <property type="entry name" value="TOPRIM"/>
    <property type="match status" value="1"/>
</dbReference>
<name>TOP3_SCHPO</name>
<protein>
    <recommendedName>
        <fullName>DNA topoisomerase 3</fullName>
        <ecNumber evidence="4">5.6.2.1</ecNumber>
    </recommendedName>
    <alternativeName>
        <fullName>DNA topoisomerase III</fullName>
    </alternativeName>
</protein>